<proteinExistence type="inferred from homology"/>
<accession>A0QTL6</accession>
<accession>I7F9S1</accession>
<name>Y1888_MYCS2</name>
<sequence length="310" mass="33140">MESTHETWDLATSVGATATMVAAGRARATTTGLIDDRFAEPLVRAVGIDFMTRWATGDLAAADVDIPGATWGMQQMTDLLAARTRYFDAFFGDAAAAGVRQAVILASGLDARGYRLDWPAGTVLFEIDMPDVLEFKGRALTDLRAEPTAEVRMVAVDLRDDWPAALRAKGFDPTRPTAWSAEGLLPFLPPEAQDRLLDAITSLSASGSRLAAEVALLGSDSEDGALGADGARDLEPLLARWREHGFDLDLGDLGNSGPRNDVDDYLEARGWTSTRTPLAALLDAAGLEVPRPADGRKSLSDNYYSTAIKG</sequence>
<evidence type="ECO:0000250" key="1"/>
<evidence type="ECO:0000305" key="2"/>
<comment type="function">
    <text evidence="1">Exhibits S-adenosyl-L-methionine-dependent methyltransferase activity.</text>
</comment>
<comment type="similarity">
    <text evidence="2">Belongs to the UPF0677 family.</text>
</comment>
<feature type="chain" id="PRO_0000361199" description="Putative S-adenosyl-L-methionine-dependent methyltransferase MSMEG_1888/MSMEI_1848">
    <location>
        <begin position="1"/>
        <end position="310"/>
    </location>
</feature>
<feature type="binding site" evidence="1">
    <location>
        <position position="128"/>
    </location>
    <ligand>
        <name>S-adenosyl-L-methionine</name>
        <dbReference type="ChEBI" id="CHEBI:59789"/>
    </ligand>
</feature>
<feature type="binding site" evidence="1">
    <location>
        <begin position="157"/>
        <end position="158"/>
    </location>
    <ligand>
        <name>S-adenosyl-L-methionine</name>
        <dbReference type="ChEBI" id="CHEBI:59789"/>
    </ligand>
</feature>
<keyword id="KW-0489">Methyltransferase</keyword>
<keyword id="KW-1185">Reference proteome</keyword>
<keyword id="KW-0949">S-adenosyl-L-methionine</keyword>
<keyword id="KW-0808">Transferase</keyword>
<reference key="1">
    <citation type="submission" date="2006-10" db="EMBL/GenBank/DDBJ databases">
        <authorList>
            <person name="Fleischmann R.D."/>
            <person name="Dodson R.J."/>
            <person name="Haft D.H."/>
            <person name="Merkel J.S."/>
            <person name="Nelson W.C."/>
            <person name="Fraser C.M."/>
        </authorList>
    </citation>
    <scope>NUCLEOTIDE SEQUENCE [LARGE SCALE GENOMIC DNA]</scope>
    <source>
        <strain>ATCC 700084 / mc(2)155</strain>
    </source>
</reference>
<reference key="2">
    <citation type="journal article" date="2007" name="Genome Biol.">
        <title>Interrupted coding sequences in Mycobacterium smegmatis: authentic mutations or sequencing errors?</title>
        <authorList>
            <person name="Deshayes C."/>
            <person name="Perrodou E."/>
            <person name="Gallien S."/>
            <person name="Euphrasie D."/>
            <person name="Schaeffer C."/>
            <person name="Van-Dorsselaer A."/>
            <person name="Poch O."/>
            <person name="Lecompte O."/>
            <person name="Reyrat J.-M."/>
        </authorList>
    </citation>
    <scope>NUCLEOTIDE SEQUENCE [LARGE SCALE GENOMIC DNA]</scope>
    <source>
        <strain>ATCC 700084 / mc(2)155</strain>
    </source>
</reference>
<reference key="3">
    <citation type="journal article" date="2009" name="Genome Res.">
        <title>Ortho-proteogenomics: multiple proteomes investigation through orthology and a new MS-based protocol.</title>
        <authorList>
            <person name="Gallien S."/>
            <person name="Perrodou E."/>
            <person name="Carapito C."/>
            <person name="Deshayes C."/>
            <person name="Reyrat J.-M."/>
            <person name="Van Dorsselaer A."/>
            <person name="Poch O."/>
            <person name="Schaeffer C."/>
            <person name="Lecompte O."/>
        </authorList>
    </citation>
    <scope>NUCLEOTIDE SEQUENCE [LARGE SCALE GENOMIC DNA]</scope>
    <source>
        <strain>ATCC 700084 / mc(2)155</strain>
    </source>
</reference>
<protein>
    <recommendedName>
        <fullName>Putative S-adenosyl-L-methionine-dependent methyltransferase MSMEG_1888/MSMEI_1848</fullName>
        <ecNumber>2.1.1.-</ecNumber>
    </recommendedName>
</protein>
<organism>
    <name type="scientific">Mycolicibacterium smegmatis (strain ATCC 700084 / mc(2)155)</name>
    <name type="common">Mycobacterium smegmatis</name>
    <dbReference type="NCBI Taxonomy" id="246196"/>
    <lineage>
        <taxon>Bacteria</taxon>
        <taxon>Bacillati</taxon>
        <taxon>Actinomycetota</taxon>
        <taxon>Actinomycetes</taxon>
        <taxon>Mycobacteriales</taxon>
        <taxon>Mycobacteriaceae</taxon>
        <taxon>Mycolicibacterium</taxon>
    </lineage>
</organism>
<dbReference type="EC" id="2.1.1.-"/>
<dbReference type="EMBL" id="CP000480">
    <property type="protein sequence ID" value="ABK71680.1"/>
    <property type="molecule type" value="Genomic_DNA"/>
</dbReference>
<dbReference type="EMBL" id="CP001663">
    <property type="protein sequence ID" value="AFP38320.1"/>
    <property type="molecule type" value="Genomic_DNA"/>
</dbReference>
<dbReference type="RefSeq" id="WP_011727981.1">
    <property type="nucleotide sequence ID" value="NZ_SIJM01000020.1"/>
</dbReference>
<dbReference type="RefSeq" id="YP_886254.1">
    <property type="nucleotide sequence ID" value="NC_008596.1"/>
</dbReference>
<dbReference type="SMR" id="A0QTL6"/>
<dbReference type="STRING" id="246196.MSMEG_1888"/>
<dbReference type="PaxDb" id="246196-MSMEI_1848"/>
<dbReference type="KEGG" id="msb:LJ00_09425"/>
<dbReference type="KEGG" id="msg:MSMEI_1848"/>
<dbReference type="KEGG" id="msm:MSMEG_1888"/>
<dbReference type="PATRIC" id="fig|246196.19.peg.1870"/>
<dbReference type="eggNOG" id="COG3315">
    <property type="taxonomic scope" value="Bacteria"/>
</dbReference>
<dbReference type="OrthoDB" id="9806164at2"/>
<dbReference type="Proteomes" id="UP000000757">
    <property type="component" value="Chromosome"/>
</dbReference>
<dbReference type="Proteomes" id="UP000006158">
    <property type="component" value="Chromosome"/>
</dbReference>
<dbReference type="GO" id="GO:0008168">
    <property type="term" value="F:methyltransferase activity"/>
    <property type="evidence" value="ECO:0007669"/>
    <property type="project" value="UniProtKB-KW"/>
</dbReference>
<dbReference type="GO" id="GO:0032259">
    <property type="term" value="P:methylation"/>
    <property type="evidence" value="ECO:0007669"/>
    <property type="project" value="UniProtKB-KW"/>
</dbReference>
<dbReference type="Gene3D" id="3.40.50.150">
    <property type="entry name" value="Vaccinia Virus protein VP39"/>
    <property type="match status" value="1"/>
</dbReference>
<dbReference type="InterPro" id="IPR007213">
    <property type="entry name" value="Ppm1/Ppm2/Tcmp"/>
</dbReference>
<dbReference type="InterPro" id="IPR029063">
    <property type="entry name" value="SAM-dependent_MTases_sf"/>
</dbReference>
<dbReference type="InterPro" id="IPR011610">
    <property type="entry name" value="SAM_mthyl_Trfase_ML2640-like"/>
</dbReference>
<dbReference type="NCBIfam" id="TIGR00027">
    <property type="entry name" value="mthyl_TIGR00027"/>
    <property type="match status" value="1"/>
</dbReference>
<dbReference type="PANTHER" id="PTHR43619">
    <property type="entry name" value="S-ADENOSYL-L-METHIONINE-DEPENDENT METHYLTRANSFERASE YKTD-RELATED"/>
    <property type="match status" value="1"/>
</dbReference>
<dbReference type="PANTHER" id="PTHR43619:SF2">
    <property type="entry name" value="S-ADENOSYL-L-METHIONINE-DEPENDENT METHYLTRANSFERASES SUPERFAMILY PROTEIN"/>
    <property type="match status" value="1"/>
</dbReference>
<dbReference type="Pfam" id="PF04072">
    <property type="entry name" value="LCM"/>
    <property type="match status" value="1"/>
</dbReference>
<dbReference type="SUPFAM" id="SSF53335">
    <property type="entry name" value="S-adenosyl-L-methionine-dependent methyltransferases"/>
    <property type="match status" value="1"/>
</dbReference>
<gene>
    <name type="ordered locus">MSMEG_1888</name>
    <name type="ordered locus">MSMEI_1848</name>
</gene>